<name>TBL44_ARATH</name>
<gene>
    <name type="primary">PMR5</name>
    <name type="synonym">TBL44</name>
    <name type="ordered locus">At5g58600</name>
    <name type="ORF">MZN1.6</name>
</gene>
<proteinExistence type="evidence at transcript level"/>
<protein>
    <recommendedName>
        <fullName>Protein PMR5</fullName>
    </recommendedName>
    <alternativeName>
        <fullName>Powdery mildew resistance protein 5</fullName>
    </alternativeName>
    <alternativeName>
        <fullName>Protein trichome birefringence-like 44</fullName>
    </alternativeName>
</protein>
<sequence length="402" mass="44833">MGSLLPLLGISVVSAIFFLVLQQPEQSSSAIILSLKKRHGSSSGSSGNQYSSSRPSAGFQGNRSTCSLFLGTWVRDNSYPLYKPADCPGVVEPEFDCQMYGRPDSDYLKYRWQPQNCNLPTFNGAQFLLKMKGKTIMFAGDSLGKNQWESLICLIVSSAPSTRTEMTRGLPLSTFRFLDYGITMSFYKAPFLVDIDAVQGKRVLKLDEISGNANAWHDADLLIFNTGHWWSHTGSMQGWDLIQSGNSYYQDMDRFVAMEKALRTWAYWVETHVDRSRTQVLFLSISPTHDNPSDWAASSSSGSKNCYGETEPITGTAYPVSSYTDQLRSVIVEVLHGMHNPAFLLDITLLSSLRKDGHPSVYSGLISGSQRSRPDQSADCSHWCLPGLPDTWNQLLYTLLIY</sequence>
<dbReference type="EMBL" id="AB020755">
    <property type="protein sequence ID" value="BAA97330.1"/>
    <property type="molecule type" value="Genomic_DNA"/>
</dbReference>
<dbReference type="EMBL" id="CP002688">
    <property type="protein sequence ID" value="AED97074.1"/>
    <property type="molecule type" value="Genomic_DNA"/>
</dbReference>
<dbReference type="EMBL" id="CP002688">
    <property type="protein sequence ID" value="AED97075.1"/>
    <property type="molecule type" value="Genomic_DNA"/>
</dbReference>
<dbReference type="EMBL" id="AK117382">
    <property type="protein sequence ID" value="BAC42051.1"/>
    <property type="molecule type" value="mRNA"/>
</dbReference>
<dbReference type="EMBL" id="BT005096">
    <property type="protein sequence ID" value="AAO50629.1"/>
    <property type="molecule type" value="mRNA"/>
</dbReference>
<dbReference type="EMBL" id="AY085512">
    <property type="protein sequence ID" value="AAM62736.1"/>
    <property type="molecule type" value="mRNA"/>
</dbReference>
<dbReference type="RefSeq" id="NP_200668.1">
    <molecule id="Q9LUZ6-1"/>
    <property type="nucleotide sequence ID" value="NM_125247.4"/>
</dbReference>
<dbReference type="RefSeq" id="NP_974961.1">
    <molecule id="Q9LUZ6-2"/>
    <property type="nucleotide sequence ID" value="NM_203232.2"/>
</dbReference>
<dbReference type="SMR" id="Q9LUZ6"/>
<dbReference type="FunCoup" id="Q9LUZ6">
    <property type="interactions" value="102"/>
</dbReference>
<dbReference type="STRING" id="3702.Q9LUZ6"/>
<dbReference type="PaxDb" id="3702-AT5G58600.1"/>
<dbReference type="ProteomicsDB" id="234266">
    <molecule id="Q9LUZ6-1"/>
</dbReference>
<dbReference type="EnsemblPlants" id="AT5G58600.1">
    <molecule id="Q9LUZ6-1"/>
    <property type="protein sequence ID" value="AT5G58600.1"/>
    <property type="gene ID" value="AT5G58600"/>
</dbReference>
<dbReference type="EnsemblPlants" id="AT5G58600.2">
    <molecule id="Q9LUZ6-2"/>
    <property type="protein sequence ID" value="AT5G58600.2"/>
    <property type="gene ID" value="AT5G58600"/>
</dbReference>
<dbReference type="GeneID" id="835974"/>
<dbReference type="Gramene" id="AT5G58600.1">
    <molecule id="Q9LUZ6-1"/>
    <property type="protein sequence ID" value="AT5G58600.1"/>
    <property type="gene ID" value="AT5G58600"/>
</dbReference>
<dbReference type="Gramene" id="AT5G58600.2">
    <molecule id="Q9LUZ6-2"/>
    <property type="protein sequence ID" value="AT5G58600.2"/>
    <property type="gene ID" value="AT5G58600"/>
</dbReference>
<dbReference type="KEGG" id="ath:AT5G58600"/>
<dbReference type="Araport" id="AT5G58600"/>
<dbReference type="TAIR" id="AT5G58600">
    <property type="gene designation" value="PMR5"/>
</dbReference>
<dbReference type="eggNOG" id="ENOG502QR9P">
    <property type="taxonomic scope" value="Eukaryota"/>
</dbReference>
<dbReference type="HOGENOM" id="CLU_020953_3_0_1"/>
<dbReference type="InParanoid" id="Q9LUZ6"/>
<dbReference type="OMA" id="REMNNHV"/>
<dbReference type="PhylomeDB" id="Q9LUZ6"/>
<dbReference type="PRO" id="PR:Q9LUZ6"/>
<dbReference type="Proteomes" id="UP000006548">
    <property type="component" value="Chromosome 5"/>
</dbReference>
<dbReference type="ExpressionAtlas" id="Q9LUZ6">
    <property type="expression patterns" value="baseline and differential"/>
</dbReference>
<dbReference type="GO" id="GO:0005783">
    <property type="term" value="C:endoplasmic reticulum"/>
    <property type="evidence" value="ECO:0000250"/>
    <property type="project" value="TAIR"/>
</dbReference>
<dbReference type="GO" id="GO:0016020">
    <property type="term" value="C:membrane"/>
    <property type="evidence" value="ECO:0007669"/>
    <property type="project" value="UniProtKB-SubCell"/>
</dbReference>
<dbReference type="GO" id="GO:0016413">
    <property type="term" value="F:O-acetyltransferase activity"/>
    <property type="evidence" value="ECO:0007669"/>
    <property type="project" value="InterPro"/>
</dbReference>
<dbReference type="GO" id="GO:0006952">
    <property type="term" value="P:defense response"/>
    <property type="evidence" value="ECO:0007669"/>
    <property type="project" value="UniProtKB-KW"/>
</dbReference>
<dbReference type="GO" id="GO:0009620">
    <property type="term" value="P:response to fungus"/>
    <property type="evidence" value="ECO:0000315"/>
    <property type="project" value="TAIR"/>
</dbReference>
<dbReference type="InterPro" id="IPR029962">
    <property type="entry name" value="TBL"/>
</dbReference>
<dbReference type="InterPro" id="IPR026057">
    <property type="entry name" value="TBL_C"/>
</dbReference>
<dbReference type="InterPro" id="IPR025846">
    <property type="entry name" value="TBL_N"/>
</dbReference>
<dbReference type="PANTHER" id="PTHR32285:SF14">
    <property type="entry name" value="PROTEIN PMR5"/>
    <property type="match status" value="1"/>
</dbReference>
<dbReference type="PANTHER" id="PTHR32285">
    <property type="entry name" value="PROTEIN TRICHOME BIREFRINGENCE-LIKE 9-RELATED"/>
    <property type="match status" value="1"/>
</dbReference>
<dbReference type="Pfam" id="PF13839">
    <property type="entry name" value="PC-Esterase"/>
    <property type="match status" value="1"/>
</dbReference>
<dbReference type="Pfam" id="PF14416">
    <property type="entry name" value="PMR5N"/>
    <property type="match status" value="1"/>
</dbReference>
<comment type="function">
    <text evidence="1 2 5 6">Required for nonhost resistance (NHR) during plant-microbe interactions. Plants mutated in PMR5 are resistant to powdery mildew species (PubMed:15584961, PubMed:19810803). May act as a bridging protein that binds pectin and other cell wall polysaccharides. Probably involved in maintaining esterification of pectins (By similarity). May be involved in the specific O-acetylation of cell wall polymers (By similarity).</text>
</comment>
<comment type="subcellular location">
    <subcellularLocation>
        <location evidence="7">Membrane</location>
        <topology evidence="7">Single-pass type II membrane protein</topology>
    </subcellularLocation>
</comment>
<comment type="alternative products">
    <event type="alternative splicing"/>
    <isoform>
        <id>Q9LUZ6-1</id>
        <name>1</name>
        <sequence type="displayed"/>
    </isoform>
    <isoform>
        <id>Q9LUZ6-2</id>
        <name>2</name>
        <sequence type="described" ref="VSP_053700 VSP_053701"/>
    </isoform>
</comment>
<comment type="tissue specificity">
    <text evidence="5">Expressed in flowers, siliques, stems and leaves.</text>
</comment>
<comment type="miscellaneous">
    <text evidence="8">Contains 2 motifs that are conserved in esterases, but it is unlikely that this protein belongs to the catalytically active pectin esterases.</text>
</comment>
<comment type="similarity">
    <text evidence="7">Belongs to the PC-esterase family. TBL subfamily.</text>
</comment>
<organism>
    <name type="scientific">Arabidopsis thaliana</name>
    <name type="common">Mouse-ear cress</name>
    <dbReference type="NCBI Taxonomy" id="3702"/>
    <lineage>
        <taxon>Eukaryota</taxon>
        <taxon>Viridiplantae</taxon>
        <taxon>Streptophyta</taxon>
        <taxon>Embryophyta</taxon>
        <taxon>Tracheophyta</taxon>
        <taxon>Spermatophyta</taxon>
        <taxon>Magnoliopsida</taxon>
        <taxon>eudicotyledons</taxon>
        <taxon>Gunneridae</taxon>
        <taxon>Pentapetalae</taxon>
        <taxon>rosids</taxon>
        <taxon>malvids</taxon>
        <taxon>Brassicales</taxon>
        <taxon>Brassicaceae</taxon>
        <taxon>Camelineae</taxon>
        <taxon>Arabidopsis</taxon>
    </lineage>
</organism>
<evidence type="ECO:0000250" key="1">
    <source>
        <dbReference type="UniProtKB" id="Q9FG35"/>
    </source>
</evidence>
<evidence type="ECO:0000250" key="2">
    <source>
        <dbReference type="UniProtKB" id="Q9LY46"/>
    </source>
</evidence>
<evidence type="ECO:0000255" key="3"/>
<evidence type="ECO:0000256" key="4">
    <source>
        <dbReference type="SAM" id="MobiDB-lite"/>
    </source>
</evidence>
<evidence type="ECO:0000269" key="5">
    <source>
    </source>
</evidence>
<evidence type="ECO:0000269" key="6">
    <source>
    </source>
</evidence>
<evidence type="ECO:0000305" key="7"/>
<evidence type="ECO:0000305" key="8">
    <source>
    </source>
</evidence>
<reference key="1">
    <citation type="journal article" date="2000" name="DNA Res.">
        <title>Structural analysis of Arabidopsis thaliana chromosome 5. X. Sequence features of the regions of 3,076,755 bp covered by sixty P1 and TAC clones.</title>
        <authorList>
            <person name="Sato S."/>
            <person name="Nakamura Y."/>
            <person name="Kaneko T."/>
            <person name="Katoh T."/>
            <person name="Asamizu E."/>
            <person name="Kotani H."/>
            <person name="Tabata S."/>
        </authorList>
    </citation>
    <scope>NUCLEOTIDE SEQUENCE [LARGE SCALE GENOMIC DNA]</scope>
    <source>
        <strain>cv. Columbia</strain>
    </source>
</reference>
<reference key="2">
    <citation type="journal article" date="2017" name="Plant J.">
        <title>Araport11: a complete reannotation of the Arabidopsis thaliana reference genome.</title>
        <authorList>
            <person name="Cheng C.Y."/>
            <person name="Krishnakumar V."/>
            <person name="Chan A.P."/>
            <person name="Thibaud-Nissen F."/>
            <person name="Schobel S."/>
            <person name="Town C.D."/>
        </authorList>
    </citation>
    <scope>GENOME REANNOTATION</scope>
    <source>
        <strain>cv. Columbia</strain>
    </source>
</reference>
<reference key="3">
    <citation type="journal article" date="2002" name="Science">
        <title>Functional annotation of a full-length Arabidopsis cDNA collection.</title>
        <authorList>
            <person name="Seki M."/>
            <person name="Narusaka M."/>
            <person name="Kamiya A."/>
            <person name="Ishida J."/>
            <person name="Satou M."/>
            <person name="Sakurai T."/>
            <person name="Nakajima M."/>
            <person name="Enju A."/>
            <person name="Akiyama K."/>
            <person name="Oono Y."/>
            <person name="Muramatsu M."/>
            <person name="Hayashizaki Y."/>
            <person name="Kawai J."/>
            <person name="Carninci P."/>
            <person name="Itoh M."/>
            <person name="Ishii Y."/>
            <person name="Arakawa T."/>
            <person name="Shibata K."/>
            <person name="Shinagawa A."/>
            <person name="Shinozaki K."/>
        </authorList>
    </citation>
    <scope>NUCLEOTIDE SEQUENCE [LARGE SCALE MRNA] (ISOFORM 1)</scope>
    <source>
        <strain>cv. Columbia</strain>
    </source>
</reference>
<reference key="4">
    <citation type="journal article" date="2003" name="Science">
        <title>Empirical analysis of transcriptional activity in the Arabidopsis genome.</title>
        <authorList>
            <person name="Yamada K."/>
            <person name="Lim J."/>
            <person name="Dale J.M."/>
            <person name="Chen H."/>
            <person name="Shinn P."/>
            <person name="Palm C.J."/>
            <person name="Southwick A.M."/>
            <person name="Wu H.C."/>
            <person name="Kim C.J."/>
            <person name="Nguyen M."/>
            <person name="Pham P.K."/>
            <person name="Cheuk R.F."/>
            <person name="Karlin-Newmann G."/>
            <person name="Liu S.X."/>
            <person name="Lam B."/>
            <person name="Sakano H."/>
            <person name="Wu T."/>
            <person name="Yu G."/>
            <person name="Miranda M."/>
            <person name="Quach H.L."/>
            <person name="Tripp M."/>
            <person name="Chang C.H."/>
            <person name="Lee J.M."/>
            <person name="Toriumi M.J."/>
            <person name="Chan M.M."/>
            <person name="Tang C.C."/>
            <person name="Onodera C.S."/>
            <person name="Deng J.M."/>
            <person name="Akiyama K."/>
            <person name="Ansari Y."/>
            <person name="Arakawa T."/>
            <person name="Banh J."/>
            <person name="Banno F."/>
            <person name="Bowser L."/>
            <person name="Brooks S.Y."/>
            <person name="Carninci P."/>
            <person name="Chao Q."/>
            <person name="Choy N."/>
            <person name="Enju A."/>
            <person name="Goldsmith A.D."/>
            <person name="Gurjal M."/>
            <person name="Hansen N.F."/>
            <person name="Hayashizaki Y."/>
            <person name="Johnson-Hopson C."/>
            <person name="Hsuan V.W."/>
            <person name="Iida K."/>
            <person name="Karnes M."/>
            <person name="Khan S."/>
            <person name="Koesema E."/>
            <person name="Ishida J."/>
            <person name="Jiang P.X."/>
            <person name="Jones T."/>
            <person name="Kawai J."/>
            <person name="Kamiya A."/>
            <person name="Meyers C."/>
            <person name="Nakajima M."/>
            <person name="Narusaka M."/>
            <person name="Seki M."/>
            <person name="Sakurai T."/>
            <person name="Satou M."/>
            <person name="Tamse R."/>
            <person name="Vaysberg M."/>
            <person name="Wallender E.K."/>
            <person name="Wong C."/>
            <person name="Yamamura Y."/>
            <person name="Yuan S."/>
            <person name="Shinozaki K."/>
            <person name="Davis R.W."/>
            <person name="Theologis A."/>
            <person name="Ecker J.R."/>
        </authorList>
    </citation>
    <scope>NUCLEOTIDE SEQUENCE [LARGE SCALE MRNA] (ISOFORM 1)</scope>
    <source>
        <strain>cv. Columbia</strain>
    </source>
</reference>
<reference key="5">
    <citation type="submission" date="2002-03" db="EMBL/GenBank/DDBJ databases">
        <title>Full-length cDNA from Arabidopsis thaliana.</title>
        <authorList>
            <person name="Brover V.V."/>
            <person name="Troukhan M.E."/>
            <person name="Alexandrov N.A."/>
            <person name="Lu Y.-P."/>
            <person name="Flavell R.B."/>
            <person name="Feldmann K.A."/>
        </authorList>
    </citation>
    <scope>NUCLEOTIDE SEQUENCE [LARGE SCALE MRNA] (ISOFORM 1)</scope>
</reference>
<reference key="6">
    <citation type="journal article" date="2004" name="Plant J.">
        <title>Mutations in PMR5 result in powdery mildew resistance and altered cell wall composition.</title>
        <authorList>
            <person name="Vogel J.P."/>
            <person name="Raab T.K."/>
            <person name="Somerville C.R."/>
            <person name="Somerville S.C."/>
        </authorList>
    </citation>
    <scope>FUNCTION</scope>
    <scope>TISSUE SPECIFICITY</scope>
</reference>
<reference key="7">
    <citation type="journal article" date="2007" name="Plant J.">
        <title>Arabidopsis ESK1 encodes a novel regulator of freezing tolerance.</title>
        <authorList>
            <person name="Xin Z."/>
            <person name="Mandaokar A."/>
            <person name="Chen J."/>
            <person name="Last R.L."/>
            <person name="Browse J."/>
        </authorList>
    </citation>
    <scope>GENE FAMILY</scope>
    <source>
        <strain>cv. Columbia</strain>
    </source>
</reference>
<reference key="8">
    <citation type="journal article" date="2009" name="Mol. Plant Microbe Interact.">
        <title>AGB1 and PMR5 contribute to PEN2-mediated preinvasion resistance to Magnaporthe oryzae in Arabidopsis thaliana.</title>
        <authorList>
            <person name="Maeda K."/>
            <person name="Houjyou Y."/>
            <person name="Komatsu T."/>
            <person name="Hori H."/>
            <person name="Kodaira T."/>
            <person name="Ishikawa A."/>
        </authorList>
    </citation>
    <scope>FUNCTION</scope>
</reference>
<reference key="9">
    <citation type="journal article" date="2010" name="Plant Physiol.">
        <title>TRICHOME BIREFRINGENCE and its homolog AT5G01360 encode plant-specific DUF231 proteins required for cellulose biosynthesis in Arabidopsis.</title>
        <authorList>
            <person name="Bischoff V."/>
            <person name="Nita S."/>
            <person name="Neumetzler L."/>
            <person name="Schindelasch D."/>
            <person name="Urbain A."/>
            <person name="Eshed R."/>
            <person name="Persson S."/>
            <person name="Delmer D."/>
            <person name="Scheible W.R."/>
        </authorList>
    </citation>
    <scope>GENE FAMILY</scope>
    <scope>NOMENCLATURE</scope>
</reference>
<reference key="10">
    <citation type="journal article" date="2010" name="Plant Signal. Behav.">
        <title>Involvement of TBL/DUF231 proteins into cell wall biology.</title>
        <authorList>
            <person name="Bischoff V."/>
            <person name="Selbig J."/>
            <person name="Scheible W.R."/>
        </authorList>
    </citation>
    <scope>3D-STRUCTURE MODELING</scope>
</reference>
<accession>Q9LUZ6</accession>
<accession>F4KGA2</accession>
<accession>Q8LEB9</accession>
<feature type="chain" id="PRO_0000425409" description="Protein PMR5">
    <location>
        <begin position="1"/>
        <end position="402"/>
    </location>
</feature>
<feature type="transmembrane region" description="Helical; Signal-anchor for type II membrane protein" evidence="3">
    <location>
        <begin position="7"/>
        <end position="23"/>
    </location>
</feature>
<feature type="region of interest" description="Disordered" evidence="4">
    <location>
        <begin position="40"/>
        <end position="60"/>
    </location>
</feature>
<feature type="short sequence motif" description="GDS motif">
    <location>
        <begin position="140"/>
        <end position="142"/>
    </location>
</feature>
<feature type="short sequence motif" description="DCXHWCLPGXXDXWN motif">
    <location>
        <begin position="379"/>
        <end position="393"/>
    </location>
</feature>
<feature type="compositionally biased region" description="Low complexity" evidence="4">
    <location>
        <begin position="41"/>
        <end position="56"/>
    </location>
</feature>
<feature type="splice variant" id="VSP_053700" description="In isoform 2." evidence="7">
    <original>N</original>
    <variation>K</variation>
    <location>
        <position position="291"/>
    </location>
</feature>
<feature type="splice variant" id="VSP_053701" description="In isoform 2." evidence="7">
    <location>
        <begin position="292"/>
        <end position="402"/>
    </location>
</feature>
<feature type="sequence conflict" description="In Ref. 5; AAM62736." evidence="7" ref="5">
    <original>V</original>
    <variation>L</variation>
    <location>
        <position position="20"/>
    </location>
</feature>
<feature type="sequence conflict" description="In Ref. 5; AAM62736." evidence="7" ref="5">
    <original>N</original>
    <variation>K</variation>
    <location>
        <position position="340"/>
    </location>
</feature>
<keyword id="KW-0025">Alternative splicing</keyword>
<keyword id="KW-0472">Membrane</keyword>
<keyword id="KW-0611">Plant defense</keyword>
<keyword id="KW-1185">Reference proteome</keyword>
<keyword id="KW-0735">Signal-anchor</keyword>
<keyword id="KW-0812">Transmembrane</keyword>
<keyword id="KW-1133">Transmembrane helix</keyword>